<name>RL15_CAMC5</name>
<protein>
    <recommendedName>
        <fullName evidence="1">Large ribosomal subunit protein uL15</fullName>
    </recommendedName>
    <alternativeName>
        <fullName evidence="3">50S ribosomal protein L15</fullName>
    </alternativeName>
</protein>
<sequence>MALQNLTPAPGSTHATKRLGRGQGSGNGKTAGKGNKGQRARKGYNEKRGFEGGQQPLQRRLPKVGFTSKFEKPYVINVEKITAIKELSEITVATIASVHKISKSVTKIKLIGVSAKELASKVKDENVSVSGSK</sequence>
<accession>A7H0Z4</accession>
<comment type="function">
    <text evidence="1">Binds to the 23S rRNA.</text>
</comment>
<comment type="subunit">
    <text evidence="1">Part of the 50S ribosomal subunit.</text>
</comment>
<comment type="similarity">
    <text evidence="1">Belongs to the universal ribosomal protein uL15 family.</text>
</comment>
<dbReference type="EMBL" id="CP000767">
    <property type="protein sequence ID" value="EAT99600.1"/>
    <property type="molecule type" value="Genomic_DNA"/>
</dbReference>
<dbReference type="RefSeq" id="WP_009649704.1">
    <property type="nucleotide sequence ID" value="NC_009715.2"/>
</dbReference>
<dbReference type="SMR" id="A7H0Z4"/>
<dbReference type="STRING" id="360105.CCV52592_1015"/>
<dbReference type="GeneID" id="61003080"/>
<dbReference type="KEGG" id="ccv:CCV52592_1015"/>
<dbReference type="HOGENOM" id="CLU_055188_6_0_7"/>
<dbReference type="OrthoDB" id="9810293at2"/>
<dbReference type="Proteomes" id="UP000006380">
    <property type="component" value="Chromosome"/>
</dbReference>
<dbReference type="GO" id="GO:0022625">
    <property type="term" value="C:cytosolic large ribosomal subunit"/>
    <property type="evidence" value="ECO:0007669"/>
    <property type="project" value="TreeGrafter"/>
</dbReference>
<dbReference type="GO" id="GO:0019843">
    <property type="term" value="F:rRNA binding"/>
    <property type="evidence" value="ECO:0007669"/>
    <property type="project" value="UniProtKB-UniRule"/>
</dbReference>
<dbReference type="GO" id="GO:0003735">
    <property type="term" value="F:structural constituent of ribosome"/>
    <property type="evidence" value="ECO:0007669"/>
    <property type="project" value="InterPro"/>
</dbReference>
<dbReference type="GO" id="GO:0006412">
    <property type="term" value="P:translation"/>
    <property type="evidence" value="ECO:0007669"/>
    <property type="project" value="UniProtKB-UniRule"/>
</dbReference>
<dbReference type="HAMAP" id="MF_01341">
    <property type="entry name" value="Ribosomal_uL15"/>
    <property type="match status" value="1"/>
</dbReference>
<dbReference type="InterPro" id="IPR030878">
    <property type="entry name" value="Ribosomal_uL15"/>
</dbReference>
<dbReference type="InterPro" id="IPR036227">
    <property type="entry name" value="Ribosomal_uL15/eL18_sf"/>
</dbReference>
<dbReference type="InterPro" id="IPR005749">
    <property type="entry name" value="Ribosomal_uL15_bac-type"/>
</dbReference>
<dbReference type="NCBIfam" id="TIGR01071">
    <property type="entry name" value="rplO_bact"/>
    <property type="match status" value="1"/>
</dbReference>
<dbReference type="PANTHER" id="PTHR12934">
    <property type="entry name" value="50S RIBOSOMAL PROTEIN L15"/>
    <property type="match status" value="1"/>
</dbReference>
<dbReference type="PANTHER" id="PTHR12934:SF11">
    <property type="entry name" value="LARGE RIBOSOMAL SUBUNIT PROTEIN UL15M"/>
    <property type="match status" value="1"/>
</dbReference>
<dbReference type="SUPFAM" id="SSF52080">
    <property type="entry name" value="Ribosomal proteins L15p and L18e"/>
    <property type="match status" value="1"/>
</dbReference>
<reference key="1">
    <citation type="submission" date="2007-07" db="EMBL/GenBank/DDBJ databases">
        <title>Genome sequence of Campylobacter curvus 525.92 isolated from human feces.</title>
        <authorList>
            <person name="Fouts D.E."/>
            <person name="Mongodin E.F."/>
            <person name="Puiu D."/>
            <person name="Sebastian Y."/>
            <person name="Miller W.G."/>
            <person name="Mandrell R.E."/>
            <person name="Lastovica A.J."/>
            <person name="Nelson K.E."/>
        </authorList>
    </citation>
    <scope>NUCLEOTIDE SEQUENCE [LARGE SCALE GENOMIC DNA]</scope>
    <source>
        <strain>525.92</strain>
    </source>
</reference>
<gene>
    <name evidence="1" type="primary">rplO</name>
    <name type="ordered locus">Ccur92_18320</name>
    <name type="ORF">CCV52592_1015</name>
</gene>
<keyword id="KW-1185">Reference proteome</keyword>
<keyword id="KW-0687">Ribonucleoprotein</keyword>
<keyword id="KW-0689">Ribosomal protein</keyword>
<keyword id="KW-0694">RNA-binding</keyword>
<keyword id="KW-0699">rRNA-binding</keyword>
<organism>
    <name type="scientific">Campylobacter curvus (strain 525.92)</name>
    <dbReference type="NCBI Taxonomy" id="360105"/>
    <lineage>
        <taxon>Bacteria</taxon>
        <taxon>Pseudomonadati</taxon>
        <taxon>Campylobacterota</taxon>
        <taxon>Epsilonproteobacteria</taxon>
        <taxon>Campylobacterales</taxon>
        <taxon>Campylobacteraceae</taxon>
        <taxon>Campylobacter</taxon>
    </lineage>
</organism>
<evidence type="ECO:0000255" key="1">
    <source>
        <dbReference type="HAMAP-Rule" id="MF_01341"/>
    </source>
</evidence>
<evidence type="ECO:0000256" key="2">
    <source>
        <dbReference type="SAM" id="MobiDB-lite"/>
    </source>
</evidence>
<evidence type="ECO:0000305" key="3"/>
<proteinExistence type="inferred from homology"/>
<feature type="chain" id="PRO_1000054445" description="Large ribosomal subunit protein uL15">
    <location>
        <begin position="1"/>
        <end position="133"/>
    </location>
</feature>
<feature type="region of interest" description="Disordered" evidence="2">
    <location>
        <begin position="1"/>
        <end position="58"/>
    </location>
</feature>
<feature type="compositionally biased region" description="Gly residues" evidence="2">
    <location>
        <begin position="21"/>
        <end position="35"/>
    </location>
</feature>